<reference key="1">
    <citation type="submission" date="2002-04" db="EMBL/GenBank/DDBJ databases">
        <authorList>
            <person name="Hamil K.G."/>
            <person name="Hall S.H."/>
        </authorList>
    </citation>
    <scope>NUCLEOTIDE SEQUENCE [MRNA]</scope>
    <source>
        <strain>Sprague-Dawley</strain>
    </source>
</reference>
<feature type="signal peptide" evidence="3">
    <location>
        <begin position="1"/>
        <end position="28"/>
    </location>
</feature>
<feature type="chain" id="PRO_0000006660" description="Cystatin-11">
    <location>
        <begin position="29"/>
        <end position="139"/>
    </location>
</feature>
<feature type="glycosylation site" description="N-linked (GlcNAc...) asparagine" evidence="3">
    <location>
        <position position="134"/>
    </location>
</feature>
<feature type="disulfide bond" evidence="1">
    <location>
        <begin position="94"/>
        <end position="102"/>
    </location>
</feature>
<feature type="disulfide bond" evidence="1">
    <location>
        <begin position="115"/>
        <end position="135"/>
    </location>
</feature>
<accession>Q8K5A3</accession>
<protein>
    <recommendedName>
        <fullName>Cystatin-11</fullName>
    </recommendedName>
</protein>
<comment type="function">
    <text evidence="2">Has antibacterial activity against the Gram-negative bacteria E.coli. May play a role in sperm maturation and fertilization.</text>
</comment>
<comment type="subcellular location">
    <subcellularLocation>
        <location evidence="2">Secreted</location>
    </subcellularLocation>
    <text evidence="2">Probably secreted into the epididymis lumen, where it localizes to the outer surface of sperm. Specifically localizes to the postacrosomal and tail regions of sperm.</text>
</comment>
<comment type="similarity">
    <text evidence="4">Belongs to the cystatin family.</text>
</comment>
<organism>
    <name type="scientific">Rattus norvegicus</name>
    <name type="common">Rat</name>
    <dbReference type="NCBI Taxonomy" id="10116"/>
    <lineage>
        <taxon>Eukaryota</taxon>
        <taxon>Metazoa</taxon>
        <taxon>Chordata</taxon>
        <taxon>Craniata</taxon>
        <taxon>Vertebrata</taxon>
        <taxon>Euteleostomi</taxon>
        <taxon>Mammalia</taxon>
        <taxon>Eutheria</taxon>
        <taxon>Euarchontoglires</taxon>
        <taxon>Glires</taxon>
        <taxon>Rodentia</taxon>
        <taxon>Myomorpha</taxon>
        <taxon>Muroidea</taxon>
        <taxon>Muridae</taxon>
        <taxon>Murinae</taxon>
        <taxon>Rattus</taxon>
    </lineage>
</organism>
<name>CST11_RAT</name>
<dbReference type="EMBL" id="AF501290">
    <property type="protein sequence ID" value="AAM21709.1"/>
    <property type="molecule type" value="mRNA"/>
</dbReference>
<dbReference type="RefSeq" id="NP_620785.1">
    <property type="nucleotide sequence ID" value="NM_139085.1"/>
</dbReference>
<dbReference type="SMR" id="Q8K5A3"/>
<dbReference type="FunCoup" id="Q8K5A3">
    <property type="interactions" value="43"/>
</dbReference>
<dbReference type="STRING" id="10116.ENSRNOP00000006427"/>
<dbReference type="GlyCosmos" id="Q8K5A3">
    <property type="glycosylation" value="1 site, No reported glycans"/>
</dbReference>
<dbReference type="GlyGen" id="Q8K5A3">
    <property type="glycosylation" value="1 site"/>
</dbReference>
<dbReference type="PhosphoSitePlus" id="Q8K5A3"/>
<dbReference type="PaxDb" id="10116-ENSRNOP00000006427"/>
<dbReference type="Ensembl" id="ENSRNOT00000006427.3">
    <property type="protein sequence ID" value="ENSRNOP00000006427.1"/>
    <property type="gene ID" value="ENSRNOG00000004808.5"/>
</dbReference>
<dbReference type="GeneID" id="245916"/>
<dbReference type="KEGG" id="rno:245916"/>
<dbReference type="UCSC" id="RGD:620589">
    <property type="organism name" value="rat"/>
</dbReference>
<dbReference type="AGR" id="RGD:620589"/>
<dbReference type="CTD" id="140880"/>
<dbReference type="RGD" id="620589">
    <property type="gene designation" value="Cst11"/>
</dbReference>
<dbReference type="eggNOG" id="ENOG502RWFM">
    <property type="taxonomic scope" value="Eukaryota"/>
</dbReference>
<dbReference type="GeneTree" id="ENSGT00910000144356"/>
<dbReference type="HOGENOM" id="CLU_118168_2_1_1"/>
<dbReference type="InParanoid" id="Q8K5A3"/>
<dbReference type="OMA" id="NCVPQEG"/>
<dbReference type="OrthoDB" id="1908104at2759"/>
<dbReference type="PhylomeDB" id="Q8K5A3"/>
<dbReference type="PRO" id="PR:Q8K5A3"/>
<dbReference type="Proteomes" id="UP000002494">
    <property type="component" value="Chromosome 3"/>
</dbReference>
<dbReference type="Bgee" id="ENSRNOG00000004808">
    <property type="expression patterns" value="Expressed in testis"/>
</dbReference>
<dbReference type="GO" id="GO:0005737">
    <property type="term" value="C:cytoplasm"/>
    <property type="evidence" value="ECO:0000250"/>
    <property type="project" value="UniProtKB"/>
</dbReference>
<dbReference type="GO" id="GO:0005576">
    <property type="term" value="C:extracellular region"/>
    <property type="evidence" value="ECO:0007669"/>
    <property type="project" value="UniProtKB-SubCell"/>
</dbReference>
<dbReference type="GO" id="GO:0005634">
    <property type="term" value="C:nucleus"/>
    <property type="evidence" value="ECO:0000250"/>
    <property type="project" value="UniProtKB"/>
</dbReference>
<dbReference type="GO" id="GO:0036126">
    <property type="term" value="C:sperm flagellum"/>
    <property type="evidence" value="ECO:0000250"/>
    <property type="project" value="UniProtKB"/>
</dbReference>
<dbReference type="GO" id="GO:0061827">
    <property type="term" value="C:sperm head"/>
    <property type="evidence" value="ECO:0000250"/>
    <property type="project" value="UniProtKB"/>
</dbReference>
<dbReference type="GO" id="GO:0004869">
    <property type="term" value="F:cysteine-type endopeptidase inhibitor activity"/>
    <property type="evidence" value="ECO:0007669"/>
    <property type="project" value="UniProtKB-KW"/>
</dbReference>
<dbReference type="GO" id="GO:0030521">
    <property type="term" value="P:androgen receptor signaling pathway"/>
    <property type="evidence" value="ECO:0000250"/>
    <property type="project" value="UniProtKB"/>
</dbReference>
<dbReference type="GO" id="GO:0050829">
    <property type="term" value="P:defense response to Gram-negative bacterium"/>
    <property type="evidence" value="ECO:0000250"/>
    <property type="project" value="UniProtKB"/>
</dbReference>
<dbReference type="GO" id="GO:0031640">
    <property type="term" value="P:killing of cells of another organism"/>
    <property type="evidence" value="ECO:0000250"/>
    <property type="project" value="UniProtKB"/>
</dbReference>
<dbReference type="CDD" id="cd00042">
    <property type="entry name" value="CY"/>
    <property type="match status" value="1"/>
</dbReference>
<dbReference type="FunFam" id="3.10.450.10:FF:000004">
    <property type="entry name" value="Cystatin C"/>
    <property type="match status" value="1"/>
</dbReference>
<dbReference type="Gene3D" id="3.10.450.10">
    <property type="match status" value="1"/>
</dbReference>
<dbReference type="InterPro" id="IPR042930">
    <property type="entry name" value="CST11"/>
</dbReference>
<dbReference type="InterPro" id="IPR000010">
    <property type="entry name" value="Cystatin_dom"/>
</dbReference>
<dbReference type="InterPro" id="IPR046350">
    <property type="entry name" value="Cystatin_sf"/>
</dbReference>
<dbReference type="PANTHER" id="PTHR47886">
    <property type="entry name" value="CYSTATIN-11"/>
    <property type="match status" value="1"/>
</dbReference>
<dbReference type="PANTHER" id="PTHR47886:SF1">
    <property type="entry name" value="CYSTATIN-11"/>
    <property type="match status" value="1"/>
</dbReference>
<dbReference type="Pfam" id="PF00031">
    <property type="entry name" value="Cystatin"/>
    <property type="match status" value="1"/>
</dbReference>
<dbReference type="SMART" id="SM00043">
    <property type="entry name" value="CY"/>
    <property type="match status" value="1"/>
</dbReference>
<dbReference type="SUPFAM" id="SSF54403">
    <property type="entry name" value="Cystatin/monellin"/>
    <property type="match status" value="1"/>
</dbReference>
<keyword id="KW-1015">Disulfide bond</keyword>
<keyword id="KW-0325">Glycoprotein</keyword>
<keyword id="KW-0646">Protease inhibitor</keyword>
<keyword id="KW-1185">Reference proteome</keyword>
<keyword id="KW-0964">Secreted</keyword>
<keyword id="KW-0732">Signal</keyword>
<keyword id="KW-0789">Thiol protease inhibitor</keyword>
<evidence type="ECO:0000250" key="1">
    <source>
        <dbReference type="UniProtKB" id="O76096"/>
    </source>
</evidence>
<evidence type="ECO:0000250" key="2">
    <source>
        <dbReference type="UniProtKB" id="Q9H112"/>
    </source>
</evidence>
<evidence type="ECO:0000255" key="3"/>
<evidence type="ECO:0000305" key="4"/>
<gene>
    <name type="primary">Cst11</name>
</gene>
<proteinExistence type="evidence at transcript level"/>
<sequence>MMARLWKTTWFLLAILVALVAFSYQVKRKTFIRVEEVNALESSVKETLEYVTEEYNKKSEDLYNFRILRILKIEKQMTNHMEFHITVEMQRTTCLKTEKNLCNVQEGELHKQIQCYFSVYVIPWLEVFKMLKKNCTNSS</sequence>